<comment type="function">
    <text evidence="1">Part of the RFC clamp loader complex which loads the PCNA sliding clamp onto DNA.</text>
</comment>
<comment type="subunit">
    <text evidence="1">Heteromultimer composed of small subunits (RfcS) and large subunits (RfcL).</text>
</comment>
<comment type="similarity">
    <text evidence="1">Belongs to the activator 1 small subunits family. RfcS subfamily.</text>
</comment>
<name>RFCS_METAR</name>
<keyword id="KW-0067">ATP-binding</keyword>
<keyword id="KW-0235">DNA replication</keyword>
<keyword id="KW-0547">Nucleotide-binding</keyword>
<keyword id="KW-1185">Reference proteome</keyword>
<dbReference type="EMBL" id="AM114193">
    <property type="protein sequence ID" value="CAJ38256.1"/>
    <property type="molecule type" value="Genomic_DNA"/>
</dbReference>
<dbReference type="RefSeq" id="WP_012034338.1">
    <property type="nucleotide sequence ID" value="NC_009464.1"/>
</dbReference>
<dbReference type="SMR" id="Q0W037"/>
<dbReference type="STRING" id="351160.LRC39"/>
<dbReference type="GeneID" id="5144547"/>
<dbReference type="KEGG" id="rci:LRC39"/>
<dbReference type="PATRIC" id="fig|351160.9.peg.13"/>
<dbReference type="eggNOG" id="arCOG00469">
    <property type="taxonomic scope" value="Archaea"/>
</dbReference>
<dbReference type="OrthoDB" id="7928at2157"/>
<dbReference type="Proteomes" id="UP000000663">
    <property type="component" value="Chromosome"/>
</dbReference>
<dbReference type="GO" id="GO:0005663">
    <property type="term" value="C:DNA replication factor C complex"/>
    <property type="evidence" value="ECO:0007669"/>
    <property type="project" value="InterPro"/>
</dbReference>
<dbReference type="GO" id="GO:0005524">
    <property type="term" value="F:ATP binding"/>
    <property type="evidence" value="ECO:0007669"/>
    <property type="project" value="UniProtKB-UniRule"/>
</dbReference>
<dbReference type="GO" id="GO:0016887">
    <property type="term" value="F:ATP hydrolysis activity"/>
    <property type="evidence" value="ECO:0007669"/>
    <property type="project" value="InterPro"/>
</dbReference>
<dbReference type="GO" id="GO:0003677">
    <property type="term" value="F:DNA binding"/>
    <property type="evidence" value="ECO:0007669"/>
    <property type="project" value="InterPro"/>
</dbReference>
<dbReference type="GO" id="GO:0003689">
    <property type="term" value="F:DNA clamp loader activity"/>
    <property type="evidence" value="ECO:0007669"/>
    <property type="project" value="UniProtKB-UniRule"/>
</dbReference>
<dbReference type="GO" id="GO:0006281">
    <property type="term" value="P:DNA repair"/>
    <property type="evidence" value="ECO:0007669"/>
    <property type="project" value="TreeGrafter"/>
</dbReference>
<dbReference type="GO" id="GO:0006261">
    <property type="term" value="P:DNA-templated DNA replication"/>
    <property type="evidence" value="ECO:0007669"/>
    <property type="project" value="TreeGrafter"/>
</dbReference>
<dbReference type="CDD" id="cd00009">
    <property type="entry name" value="AAA"/>
    <property type="match status" value="1"/>
</dbReference>
<dbReference type="CDD" id="cd18140">
    <property type="entry name" value="HLD_clamp_RFC"/>
    <property type="match status" value="1"/>
</dbReference>
<dbReference type="FunFam" id="1.20.272.10:FF:000029">
    <property type="entry name" value="Replication factor C small subunit"/>
    <property type="match status" value="1"/>
</dbReference>
<dbReference type="FunFam" id="3.40.50.300:FF:000129">
    <property type="entry name" value="Replication factor C subunit 5"/>
    <property type="match status" value="1"/>
</dbReference>
<dbReference type="Gene3D" id="1.10.8.60">
    <property type="match status" value="1"/>
</dbReference>
<dbReference type="Gene3D" id="1.20.272.10">
    <property type="match status" value="1"/>
</dbReference>
<dbReference type="Gene3D" id="3.40.50.300">
    <property type="entry name" value="P-loop containing nucleotide triphosphate hydrolases"/>
    <property type="match status" value="1"/>
</dbReference>
<dbReference type="HAMAP" id="MF_01509">
    <property type="entry name" value="RfcS"/>
    <property type="match status" value="1"/>
</dbReference>
<dbReference type="InterPro" id="IPR003593">
    <property type="entry name" value="AAA+_ATPase"/>
</dbReference>
<dbReference type="InterPro" id="IPR003959">
    <property type="entry name" value="ATPase_AAA_core"/>
</dbReference>
<dbReference type="InterPro" id="IPR008921">
    <property type="entry name" value="DNA_pol3_clamp-load_cplx_C"/>
</dbReference>
<dbReference type="InterPro" id="IPR050238">
    <property type="entry name" value="DNA_Rep/Repair_Clamp_Loader"/>
</dbReference>
<dbReference type="InterPro" id="IPR027417">
    <property type="entry name" value="P-loop_NTPase"/>
</dbReference>
<dbReference type="InterPro" id="IPR023748">
    <property type="entry name" value="Rep_factor-C_ssu_arc"/>
</dbReference>
<dbReference type="InterPro" id="IPR013748">
    <property type="entry name" value="Rep_factorC_C"/>
</dbReference>
<dbReference type="InterPro" id="IPR047854">
    <property type="entry name" value="RFC_lid"/>
</dbReference>
<dbReference type="NCBIfam" id="NF001679">
    <property type="entry name" value="PRK00440.1"/>
    <property type="match status" value="1"/>
</dbReference>
<dbReference type="PANTHER" id="PTHR11669">
    <property type="entry name" value="REPLICATION FACTOR C / DNA POLYMERASE III GAMMA-TAU SUBUNIT"/>
    <property type="match status" value="1"/>
</dbReference>
<dbReference type="PANTHER" id="PTHR11669:SF20">
    <property type="entry name" value="REPLICATION FACTOR C SUBUNIT 4"/>
    <property type="match status" value="1"/>
</dbReference>
<dbReference type="Pfam" id="PF00004">
    <property type="entry name" value="AAA"/>
    <property type="match status" value="1"/>
</dbReference>
<dbReference type="Pfam" id="PF25361">
    <property type="entry name" value="AAA_lid_RFC1"/>
    <property type="match status" value="1"/>
</dbReference>
<dbReference type="Pfam" id="PF08542">
    <property type="entry name" value="Rep_fac_C"/>
    <property type="match status" value="1"/>
</dbReference>
<dbReference type="SMART" id="SM00382">
    <property type="entry name" value="AAA"/>
    <property type="match status" value="1"/>
</dbReference>
<dbReference type="SUPFAM" id="SSF52540">
    <property type="entry name" value="P-loop containing nucleoside triphosphate hydrolases"/>
    <property type="match status" value="1"/>
</dbReference>
<dbReference type="SUPFAM" id="SSF48019">
    <property type="entry name" value="post-AAA+ oligomerization domain-like"/>
    <property type="match status" value="1"/>
</dbReference>
<reference key="1">
    <citation type="journal article" date="2006" name="Science">
        <title>Genome of rice cluster I archaea -- the key methane producers in the rice rhizosphere.</title>
        <authorList>
            <person name="Erkel C."/>
            <person name="Kube M."/>
            <person name="Reinhardt R."/>
            <person name="Liesack W."/>
        </authorList>
    </citation>
    <scope>NUCLEOTIDE SEQUENCE [LARGE SCALE GENOMIC DNA]</scope>
    <source>
        <strain>DSM 22066 / NBRC 105507 / MRE50</strain>
    </source>
</reference>
<evidence type="ECO:0000255" key="1">
    <source>
        <dbReference type="HAMAP-Rule" id="MF_01509"/>
    </source>
</evidence>
<feature type="chain" id="PRO_0000292192" description="Replication factor C small subunit">
    <location>
        <begin position="1"/>
        <end position="322"/>
    </location>
</feature>
<feature type="binding site" evidence="1">
    <location>
        <begin position="45"/>
        <end position="52"/>
    </location>
    <ligand>
        <name>ATP</name>
        <dbReference type="ChEBI" id="CHEBI:30616"/>
    </ligand>
</feature>
<sequence>MAEDEIWTEKYRPRRLEDVIGHQQITRRLISYVKSGNLPHLLFSGPPGVGKTACAVALARELYGETWHSNFIELNASDERGIDVVRNNIKNFARTAPLGEAKFKIIFLDEADALTSDAQSALRRTMERYAATCRFIISCNYSSKIIEPIQSRCAVYRFGPLNATDITTGITRIAKNEGLKIEKDGMDALIYVARGDMRRAINALQSAATIAKDITADVIYQTTSTAKPKEIEDMLKLALNGQFMDSRNKLDELLITYGLSGTDIIDQIYRSMFELGLDEDVLVALVDRIGEADFRLTEGASERIQIEALLAHFKMQGAARSK</sequence>
<protein>
    <recommendedName>
        <fullName evidence="1">Replication factor C small subunit</fullName>
        <shortName evidence="1">RFC small subunit</shortName>
    </recommendedName>
    <alternativeName>
        <fullName evidence="1">Clamp loader small subunit</fullName>
    </alternativeName>
</protein>
<gene>
    <name evidence="1" type="primary">rfcS</name>
    <name type="ordered locus">UNCMA_00130</name>
    <name type="ORF">LRC39</name>
</gene>
<proteinExistence type="inferred from homology"/>
<accession>Q0W037</accession>
<organism>
    <name type="scientific">Methanocella arvoryzae (strain DSM 22066 / NBRC 105507 / MRE50)</name>
    <dbReference type="NCBI Taxonomy" id="351160"/>
    <lineage>
        <taxon>Archaea</taxon>
        <taxon>Methanobacteriati</taxon>
        <taxon>Methanobacteriota</taxon>
        <taxon>Stenosarchaea group</taxon>
        <taxon>Methanomicrobia</taxon>
        <taxon>Methanocellales</taxon>
        <taxon>Methanocellaceae</taxon>
        <taxon>Methanocella</taxon>
    </lineage>
</organism>